<comment type="function">
    <text evidence="1">Protease with a carboxypeptidase B-like function involved in the C-terminal processing of the lysine and arginine residues from protein precursors. Promotes cell fusion and is involved in the programmed cell death (By similarity).</text>
</comment>
<comment type="catalytic activity">
    <reaction>
        <text>Preferential release of a C-terminal arginine or lysine residue.</text>
        <dbReference type="EC" id="3.4.16.6"/>
    </reaction>
</comment>
<comment type="subcellular location">
    <subcellularLocation>
        <location evidence="1">Golgi apparatus</location>
        <location evidence="1">trans-Golgi network membrane</location>
        <topology evidence="1">Single-pass type I membrane protein</topology>
    </subcellularLocation>
</comment>
<comment type="similarity">
    <text evidence="5">Belongs to the peptidase S10 family.</text>
</comment>
<dbReference type="EC" id="3.4.16.6"/>
<dbReference type="EMBL" id="ABSU01000043">
    <property type="protein sequence ID" value="EFE29379.1"/>
    <property type="molecule type" value="Genomic_DNA"/>
</dbReference>
<dbReference type="RefSeq" id="XP_003010019.1">
    <property type="nucleotide sequence ID" value="XM_003009973.1"/>
</dbReference>
<dbReference type="SMR" id="D4B5L8"/>
<dbReference type="STRING" id="663331.D4B5L8"/>
<dbReference type="ESTHER" id="artbc-kex1">
    <property type="family name" value="Carboxypeptidase_S10"/>
</dbReference>
<dbReference type="MEROPS" id="S10.007"/>
<dbReference type="GlyCosmos" id="D4B5L8">
    <property type="glycosylation" value="8 sites, No reported glycans"/>
</dbReference>
<dbReference type="GeneID" id="9525614"/>
<dbReference type="KEGG" id="abe:ARB_03758"/>
<dbReference type="eggNOG" id="KOG1282">
    <property type="taxonomic scope" value="Eukaryota"/>
</dbReference>
<dbReference type="HOGENOM" id="CLU_008523_11_0_1"/>
<dbReference type="OMA" id="PLMFAGQ"/>
<dbReference type="Proteomes" id="UP000008866">
    <property type="component" value="Unassembled WGS sequence"/>
</dbReference>
<dbReference type="GO" id="GO:0016020">
    <property type="term" value="C:membrane"/>
    <property type="evidence" value="ECO:0007669"/>
    <property type="project" value="UniProtKB-KW"/>
</dbReference>
<dbReference type="GO" id="GO:0005802">
    <property type="term" value="C:trans-Golgi network"/>
    <property type="evidence" value="ECO:0007669"/>
    <property type="project" value="TreeGrafter"/>
</dbReference>
<dbReference type="GO" id="GO:0004185">
    <property type="term" value="F:serine-type carboxypeptidase activity"/>
    <property type="evidence" value="ECO:0007669"/>
    <property type="project" value="UniProtKB-EC"/>
</dbReference>
<dbReference type="GO" id="GO:0006915">
    <property type="term" value="P:apoptotic process"/>
    <property type="evidence" value="ECO:0007669"/>
    <property type="project" value="UniProtKB-KW"/>
</dbReference>
<dbReference type="GO" id="GO:0006508">
    <property type="term" value="P:proteolysis"/>
    <property type="evidence" value="ECO:0007669"/>
    <property type="project" value="UniProtKB-KW"/>
</dbReference>
<dbReference type="FunFam" id="3.40.50.1820:FF:000121">
    <property type="entry name" value="Carboxypeptidase D"/>
    <property type="match status" value="1"/>
</dbReference>
<dbReference type="Gene3D" id="3.40.50.1820">
    <property type="entry name" value="alpha/beta hydrolase"/>
    <property type="match status" value="1"/>
</dbReference>
<dbReference type="InterPro" id="IPR029058">
    <property type="entry name" value="AB_hydrolase_fold"/>
</dbReference>
<dbReference type="InterPro" id="IPR001563">
    <property type="entry name" value="Peptidase_S10"/>
</dbReference>
<dbReference type="InterPro" id="IPR018202">
    <property type="entry name" value="Ser_caboxypep_ser_AS"/>
</dbReference>
<dbReference type="PANTHER" id="PTHR11802:SF190">
    <property type="entry name" value="PHEROMONE-PROCESSING CARBOXYPEPTIDASE KEX1"/>
    <property type="match status" value="1"/>
</dbReference>
<dbReference type="PANTHER" id="PTHR11802">
    <property type="entry name" value="SERINE PROTEASE FAMILY S10 SERINE CARBOXYPEPTIDASE"/>
    <property type="match status" value="1"/>
</dbReference>
<dbReference type="Pfam" id="PF00450">
    <property type="entry name" value="Peptidase_S10"/>
    <property type="match status" value="1"/>
</dbReference>
<dbReference type="PRINTS" id="PR00724">
    <property type="entry name" value="CRBOXYPTASEC"/>
</dbReference>
<dbReference type="SUPFAM" id="SSF53474">
    <property type="entry name" value="alpha/beta-Hydrolases"/>
    <property type="match status" value="1"/>
</dbReference>
<dbReference type="PROSITE" id="PS00131">
    <property type="entry name" value="CARBOXYPEPT_SER_SER"/>
    <property type="match status" value="1"/>
</dbReference>
<sequence length="596" mass="66677">MLGLATTVTLESSGCSSKMCFRLLCSVSSRPARGTFVEDACWVYIISHTFFPFNMTWRVVNIFISLSMDGALMEIGPYRLQDDHTLIYNNGSWDEFANLLFVDQPVGTGFSYVSTDSYVRELGPMADQFVTFLERWFNVFPEYERDDIYIAGESYAGQYIPYIADAIVRRNEKLSANGTSWNVQGLLIGNGWISPLEQYRSYLPFSYKEGVLDKNSDGAKAAESQLSKCMSKLKEVGKFGVHVDECERVLELILDTTKVDGKCINMYDVRLEDTPDACGMNWPPDISLVTSYLRRPDVVKALNINEDKTTGWRECSPGVGRNLQATESVPSVQLLPGLLERGMPIVLFSGDKDLICNHIGTEDLIHNMTWLNATGFELSPDVWAPRHNWEFEGSAAGIYQQARNLTYVKFYNASHMVPFDFPRRSRDMLDRFLGIDITSIGGDPADSRIDGLKGAPTSVGAHPNSTTAEEKEKEKIKIAAWEAYYKSGEVALVVVAIAASLWGFFIWRSKRREKGLEYKGIYPNLESFSSASLATFRGKRRGRMDVESAPRPDEAELETLYNAAEGSDPQDGEENFSDGKGDNEKAQSHAGMGKSR</sequence>
<feature type="signal peptide" evidence="2">
    <location>
        <begin position="1"/>
        <end position="17"/>
    </location>
</feature>
<feature type="chain" id="PRO_0000411899" description="Pheromone-processing carboxypeptidase KEX1">
    <location>
        <begin position="18"/>
        <end position="596"/>
    </location>
</feature>
<feature type="topological domain" description="Lumenal" evidence="2">
    <location>
        <begin position="18"/>
        <end position="486"/>
    </location>
</feature>
<feature type="transmembrane region" description="Helical" evidence="2">
    <location>
        <begin position="487"/>
        <end position="507"/>
    </location>
</feature>
<feature type="topological domain" description="Cytoplasmic" evidence="2">
    <location>
        <begin position="508"/>
        <end position="596"/>
    </location>
</feature>
<feature type="region of interest" description="Disordered" evidence="4">
    <location>
        <begin position="447"/>
        <end position="469"/>
    </location>
</feature>
<feature type="region of interest" description="Disordered" evidence="4">
    <location>
        <begin position="539"/>
        <end position="596"/>
    </location>
</feature>
<feature type="compositionally biased region" description="Basic and acidic residues" evidence="4">
    <location>
        <begin position="543"/>
        <end position="554"/>
    </location>
</feature>
<feature type="compositionally biased region" description="Basic and acidic residues" evidence="4">
    <location>
        <begin position="577"/>
        <end position="587"/>
    </location>
</feature>
<feature type="active site" evidence="3">
    <location>
        <position position="154"/>
    </location>
</feature>
<feature type="glycosylation site" description="N-linked (GlcNAc...) asparagine" evidence="2">
    <location>
        <position position="54"/>
    </location>
</feature>
<feature type="glycosylation site" description="N-linked (GlcNAc...) asparagine" evidence="2">
    <location>
        <position position="90"/>
    </location>
</feature>
<feature type="glycosylation site" description="N-linked (GlcNAc...) asparagine" evidence="2">
    <location>
        <position position="177"/>
    </location>
</feature>
<feature type="glycosylation site" description="N-linked (GlcNAc...) asparagine" evidence="2">
    <location>
        <position position="367"/>
    </location>
</feature>
<feature type="glycosylation site" description="N-linked (GlcNAc...) asparagine" evidence="2">
    <location>
        <position position="372"/>
    </location>
</feature>
<feature type="glycosylation site" description="N-linked (GlcNAc...) asparagine" evidence="2">
    <location>
        <position position="404"/>
    </location>
</feature>
<feature type="glycosylation site" description="N-linked (GlcNAc...) asparagine" evidence="2">
    <location>
        <position position="412"/>
    </location>
</feature>
<feature type="glycosylation site" description="N-linked (GlcNAc...) asparagine" evidence="2">
    <location>
        <position position="464"/>
    </location>
</feature>
<reference key="1">
    <citation type="journal article" date="2011" name="Genome Biol.">
        <title>Comparative and functional genomics provide insights into the pathogenicity of dermatophytic fungi.</title>
        <authorList>
            <person name="Burmester A."/>
            <person name="Shelest E."/>
            <person name="Gloeckner G."/>
            <person name="Heddergott C."/>
            <person name="Schindler S."/>
            <person name="Staib P."/>
            <person name="Heidel A."/>
            <person name="Felder M."/>
            <person name="Petzold A."/>
            <person name="Szafranski K."/>
            <person name="Feuermann M."/>
            <person name="Pedruzzi I."/>
            <person name="Priebe S."/>
            <person name="Groth M."/>
            <person name="Winkler R."/>
            <person name="Li W."/>
            <person name="Kniemeyer O."/>
            <person name="Schroeckh V."/>
            <person name="Hertweck C."/>
            <person name="Hube B."/>
            <person name="White T.C."/>
            <person name="Platzer M."/>
            <person name="Guthke R."/>
            <person name="Heitman J."/>
            <person name="Woestemeyer J."/>
            <person name="Zipfel P.F."/>
            <person name="Monod M."/>
            <person name="Brakhage A.A."/>
        </authorList>
    </citation>
    <scope>NUCLEOTIDE SEQUENCE [LARGE SCALE GENOMIC DNA]</scope>
    <source>
        <strain>ATCC MYA-4681 / CBS 112371</strain>
    </source>
</reference>
<proteinExistence type="inferred from homology"/>
<gene>
    <name type="primary">KEX1</name>
    <name type="ORF">ARB_03758</name>
</gene>
<protein>
    <recommendedName>
        <fullName>Pheromone-processing carboxypeptidase KEX1</fullName>
        <ecNumber>3.4.16.6</ecNumber>
    </recommendedName>
    <alternativeName>
        <fullName>Carboxypeptidase D</fullName>
    </alternativeName>
</protein>
<evidence type="ECO:0000250" key="1"/>
<evidence type="ECO:0000255" key="2"/>
<evidence type="ECO:0000255" key="3">
    <source>
        <dbReference type="PROSITE-ProRule" id="PRU10074"/>
    </source>
</evidence>
<evidence type="ECO:0000256" key="4">
    <source>
        <dbReference type="SAM" id="MobiDB-lite"/>
    </source>
</evidence>
<evidence type="ECO:0000305" key="5"/>
<organism>
    <name type="scientific">Arthroderma benhamiae (strain ATCC MYA-4681 / CBS 112371)</name>
    <name type="common">Trichophyton mentagrophytes</name>
    <dbReference type="NCBI Taxonomy" id="663331"/>
    <lineage>
        <taxon>Eukaryota</taxon>
        <taxon>Fungi</taxon>
        <taxon>Dikarya</taxon>
        <taxon>Ascomycota</taxon>
        <taxon>Pezizomycotina</taxon>
        <taxon>Eurotiomycetes</taxon>
        <taxon>Eurotiomycetidae</taxon>
        <taxon>Onygenales</taxon>
        <taxon>Arthrodermataceae</taxon>
        <taxon>Trichophyton</taxon>
    </lineage>
</organism>
<name>KEX1_ARTBC</name>
<keyword id="KW-0053">Apoptosis</keyword>
<keyword id="KW-0121">Carboxypeptidase</keyword>
<keyword id="KW-0325">Glycoprotein</keyword>
<keyword id="KW-0333">Golgi apparatus</keyword>
<keyword id="KW-0378">Hydrolase</keyword>
<keyword id="KW-0472">Membrane</keyword>
<keyword id="KW-0645">Protease</keyword>
<keyword id="KW-1185">Reference proteome</keyword>
<keyword id="KW-0732">Signal</keyword>
<keyword id="KW-0812">Transmembrane</keyword>
<keyword id="KW-1133">Transmembrane helix</keyword>
<accession>D4B5L8</accession>